<reference key="1">
    <citation type="journal article" date="1996" name="DNA Res.">
        <title>Sequence analysis of the genome of the unicellular cyanobacterium Synechocystis sp. strain PCC6803. II. Sequence determination of the entire genome and assignment of potential protein-coding regions.</title>
        <authorList>
            <person name="Kaneko T."/>
            <person name="Sato S."/>
            <person name="Kotani H."/>
            <person name="Tanaka A."/>
            <person name="Asamizu E."/>
            <person name="Nakamura Y."/>
            <person name="Miyajima N."/>
            <person name="Hirosawa M."/>
            <person name="Sugiura M."/>
            <person name="Sasamoto S."/>
            <person name="Kimura T."/>
            <person name="Hosouchi T."/>
            <person name="Matsuno A."/>
            <person name="Muraki A."/>
            <person name="Nakazaki N."/>
            <person name="Naruo K."/>
            <person name="Okumura S."/>
            <person name="Shimpo S."/>
            <person name="Takeuchi C."/>
            <person name="Wada T."/>
            <person name="Watanabe A."/>
            <person name="Yamada M."/>
            <person name="Yasuda M."/>
            <person name="Tabata S."/>
        </authorList>
    </citation>
    <scope>NUCLEOTIDE SEQUENCE [LARGE SCALE GENOMIC DNA]</scope>
    <source>
        <strain>ATCC 27184 / PCC 6803 / Kazusa</strain>
    </source>
</reference>
<keyword id="KW-0489">Methyltransferase</keyword>
<keyword id="KW-1185">Reference proteome</keyword>
<keyword id="KW-0808">Transferase</keyword>
<proteinExistence type="inferred from homology"/>
<protein>
    <recommendedName>
        <fullName>Uncharacterized tRNA/rRNA methyltransferase slr1673</fullName>
        <ecNumber>2.1.1.-</ecNumber>
    </recommendedName>
</protein>
<name>Y1673_SYNY3</name>
<organism>
    <name type="scientific">Synechocystis sp. (strain ATCC 27184 / PCC 6803 / Kazusa)</name>
    <dbReference type="NCBI Taxonomy" id="1111708"/>
    <lineage>
        <taxon>Bacteria</taxon>
        <taxon>Bacillati</taxon>
        <taxon>Cyanobacteriota</taxon>
        <taxon>Cyanophyceae</taxon>
        <taxon>Synechococcales</taxon>
        <taxon>Merismopediaceae</taxon>
        <taxon>Synechocystis</taxon>
    </lineage>
</organism>
<evidence type="ECO:0000305" key="1"/>
<feature type="chain" id="PRO_0000159841" description="Uncharacterized tRNA/rRNA methyltransferase slr1673">
    <location>
        <begin position="1"/>
        <end position="274"/>
    </location>
</feature>
<comment type="similarity">
    <text evidence="1">Belongs to the class IV-like SAM-binding methyltransferase superfamily. RNA methyltransferase TrmH family.</text>
</comment>
<accession>P74261</accession>
<sequence>MYPLTSDIASITSTQNPLVKQLRQLHQTKGRKQQGQLLLEGTHLLEVALAQGKGFNHGCFTAMWQEKNPVLADRLMAQSVHSYLVSGEVLAKMASTVNPDGVVATLTMDQFWRSPPPHARLGLVLERLQDPGNLGTILRTAAATGVEGIWLTADCVDPTSPKVLRSSAGSSLLLPQQQLQSLPPLLEKFHTQGLQLIATVPQATQTLWEIDFQRPTIVIFGSEGQGLSAPVLELTTHQVAIPQAPQVESLNVAIAVGVMLYEARRQQWAASTPG</sequence>
<dbReference type="EC" id="2.1.1.-"/>
<dbReference type="EMBL" id="BA000022">
    <property type="protein sequence ID" value="BAA18355.1"/>
    <property type="molecule type" value="Genomic_DNA"/>
</dbReference>
<dbReference type="PIR" id="S75896">
    <property type="entry name" value="S75896"/>
</dbReference>
<dbReference type="SMR" id="P74261"/>
<dbReference type="FunCoup" id="P74261">
    <property type="interactions" value="338"/>
</dbReference>
<dbReference type="IntAct" id="P74261">
    <property type="interactions" value="2"/>
</dbReference>
<dbReference type="STRING" id="1148.gene:10499231"/>
<dbReference type="PaxDb" id="1148-1653441"/>
<dbReference type="EnsemblBacteria" id="BAA18355">
    <property type="protein sequence ID" value="BAA18355"/>
    <property type="gene ID" value="BAA18355"/>
</dbReference>
<dbReference type="KEGG" id="syn:slr1673"/>
<dbReference type="eggNOG" id="COG0566">
    <property type="taxonomic scope" value="Bacteria"/>
</dbReference>
<dbReference type="InParanoid" id="P74261"/>
<dbReference type="PhylomeDB" id="P74261"/>
<dbReference type="Proteomes" id="UP000001425">
    <property type="component" value="Chromosome"/>
</dbReference>
<dbReference type="GO" id="GO:0005737">
    <property type="term" value="C:cytoplasm"/>
    <property type="evidence" value="ECO:0007669"/>
    <property type="project" value="UniProtKB-ARBA"/>
</dbReference>
<dbReference type="GO" id="GO:0003723">
    <property type="term" value="F:RNA binding"/>
    <property type="evidence" value="ECO:0007669"/>
    <property type="project" value="InterPro"/>
</dbReference>
<dbReference type="GO" id="GO:0008173">
    <property type="term" value="F:RNA methyltransferase activity"/>
    <property type="evidence" value="ECO:0007669"/>
    <property type="project" value="InterPro"/>
</dbReference>
<dbReference type="GO" id="GO:0032259">
    <property type="term" value="P:methylation"/>
    <property type="evidence" value="ECO:0007669"/>
    <property type="project" value="UniProtKB-KW"/>
</dbReference>
<dbReference type="GO" id="GO:0006396">
    <property type="term" value="P:RNA processing"/>
    <property type="evidence" value="ECO:0007669"/>
    <property type="project" value="InterPro"/>
</dbReference>
<dbReference type="CDD" id="cd18095">
    <property type="entry name" value="SpoU-like_rRNA-MTase"/>
    <property type="match status" value="1"/>
</dbReference>
<dbReference type="Gene3D" id="3.30.1330.30">
    <property type="match status" value="1"/>
</dbReference>
<dbReference type="Gene3D" id="3.40.1280.10">
    <property type="match status" value="1"/>
</dbReference>
<dbReference type="InterPro" id="IPR029028">
    <property type="entry name" value="Alpha/beta_knot_MTases"/>
</dbReference>
<dbReference type="InterPro" id="IPR053888">
    <property type="entry name" value="MRM3-like_sub_bind"/>
</dbReference>
<dbReference type="InterPro" id="IPR029064">
    <property type="entry name" value="Ribosomal_eL30-like_sf"/>
</dbReference>
<dbReference type="InterPro" id="IPR051259">
    <property type="entry name" value="rRNA_Methyltransferase"/>
</dbReference>
<dbReference type="InterPro" id="IPR001537">
    <property type="entry name" value="SpoU_MeTrfase"/>
</dbReference>
<dbReference type="InterPro" id="IPR013123">
    <property type="entry name" value="SpoU_subst-bd"/>
</dbReference>
<dbReference type="InterPro" id="IPR029026">
    <property type="entry name" value="tRNA_m1G_MTases_N"/>
</dbReference>
<dbReference type="PANTHER" id="PTHR43191">
    <property type="entry name" value="RRNA METHYLTRANSFERASE 3"/>
    <property type="match status" value="1"/>
</dbReference>
<dbReference type="PANTHER" id="PTHR43191:SF2">
    <property type="entry name" value="RRNA METHYLTRANSFERASE 3, MITOCHONDRIAL"/>
    <property type="match status" value="1"/>
</dbReference>
<dbReference type="Pfam" id="PF22435">
    <property type="entry name" value="MRM3-like_sub_bind"/>
    <property type="match status" value="1"/>
</dbReference>
<dbReference type="Pfam" id="PF00588">
    <property type="entry name" value="SpoU_methylase"/>
    <property type="match status" value="1"/>
</dbReference>
<dbReference type="SMART" id="SM00967">
    <property type="entry name" value="SpoU_sub_bind"/>
    <property type="match status" value="1"/>
</dbReference>
<dbReference type="SUPFAM" id="SSF75217">
    <property type="entry name" value="alpha/beta knot"/>
    <property type="match status" value="1"/>
</dbReference>
<dbReference type="SUPFAM" id="SSF55315">
    <property type="entry name" value="L30e-like"/>
    <property type="match status" value="1"/>
</dbReference>
<gene>
    <name type="ordered locus">slr1673</name>
</gene>